<dbReference type="EC" id="3.6.4.13" evidence="1"/>
<dbReference type="EMBL" id="DQ214767">
    <property type="protein sequence ID" value="ACH44598.1"/>
    <property type="molecule type" value="mRNA"/>
</dbReference>
<dbReference type="RefSeq" id="NP_001232328.1">
    <property type="nucleotide sequence ID" value="NM_001245399.1"/>
</dbReference>
<dbReference type="SMR" id="B5FZY7"/>
<dbReference type="FunCoup" id="B5FZY7">
    <property type="interactions" value="1042"/>
</dbReference>
<dbReference type="STRING" id="59729.ENSTGUP00000002204"/>
<dbReference type="Ensembl" id="ENSTGUT00000002224.2">
    <property type="protein sequence ID" value="ENSTGUP00000002204.2"/>
    <property type="gene ID" value="ENSTGUG00000002132.2"/>
</dbReference>
<dbReference type="GeneID" id="100190303"/>
<dbReference type="KEGG" id="tgu:100190303"/>
<dbReference type="CTD" id="9775"/>
<dbReference type="GeneTree" id="ENSGT00940000155037"/>
<dbReference type="InParanoid" id="B5FZY7"/>
<dbReference type="OMA" id="TRFHDFK"/>
<dbReference type="OrthoDB" id="10265785at2759"/>
<dbReference type="Proteomes" id="UP000007754">
    <property type="component" value="Chromosome 3"/>
</dbReference>
<dbReference type="GO" id="GO:0071013">
    <property type="term" value="C:catalytic step 2 spliceosome"/>
    <property type="evidence" value="ECO:0007669"/>
    <property type="project" value="Ensembl"/>
</dbReference>
<dbReference type="GO" id="GO:0005737">
    <property type="term" value="C:cytoplasm"/>
    <property type="evidence" value="ECO:0007669"/>
    <property type="project" value="UniProtKB-SubCell"/>
</dbReference>
<dbReference type="GO" id="GO:0035145">
    <property type="term" value="C:exon-exon junction complex"/>
    <property type="evidence" value="ECO:0007669"/>
    <property type="project" value="Ensembl"/>
</dbReference>
<dbReference type="GO" id="GO:0016607">
    <property type="term" value="C:nuclear speck"/>
    <property type="evidence" value="ECO:0007669"/>
    <property type="project" value="UniProtKB-SubCell"/>
</dbReference>
<dbReference type="GO" id="GO:0005634">
    <property type="term" value="C:nucleus"/>
    <property type="evidence" value="ECO:0000250"/>
    <property type="project" value="UniProtKB"/>
</dbReference>
<dbReference type="GO" id="GO:0071006">
    <property type="term" value="C:U2-type catalytic step 1 spliceosome"/>
    <property type="evidence" value="ECO:0000250"/>
    <property type="project" value="UniProtKB"/>
</dbReference>
<dbReference type="GO" id="GO:0005524">
    <property type="term" value="F:ATP binding"/>
    <property type="evidence" value="ECO:0007669"/>
    <property type="project" value="UniProtKB-KW"/>
</dbReference>
<dbReference type="GO" id="GO:0016887">
    <property type="term" value="F:ATP hydrolysis activity"/>
    <property type="evidence" value="ECO:0007669"/>
    <property type="project" value="RHEA"/>
</dbReference>
<dbReference type="GO" id="GO:0003729">
    <property type="term" value="F:mRNA binding"/>
    <property type="evidence" value="ECO:0007669"/>
    <property type="project" value="Ensembl"/>
</dbReference>
<dbReference type="GO" id="GO:0008143">
    <property type="term" value="F:poly(A) binding"/>
    <property type="evidence" value="ECO:0007669"/>
    <property type="project" value="Ensembl"/>
</dbReference>
<dbReference type="GO" id="GO:0003724">
    <property type="term" value="F:RNA helicase activity"/>
    <property type="evidence" value="ECO:0007669"/>
    <property type="project" value="UniProtKB-EC"/>
</dbReference>
<dbReference type="GO" id="GO:0048701">
    <property type="term" value="P:embryonic cranial skeleton morphogenesis"/>
    <property type="evidence" value="ECO:0007669"/>
    <property type="project" value="Ensembl"/>
</dbReference>
<dbReference type="GO" id="GO:0000398">
    <property type="term" value="P:mRNA splicing, via spliceosome"/>
    <property type="evidence" value="ECO:0000250"/>
    <property type="project" value="UniProtKB"/>
</dbReference>
<dbReference type="GO" id="GO:0051028">
    <property type="term" value="P:mRNA transport"/>
    <property type="evidence" value="ECO:0007669"/>
    <property type="project" value="UniProtKB-KW"/>
</dbReference>
<dbReference type="GO" id="GO:0017148">
    <property type="term" value="P:negative regulation of translation"/>
    <property type="evidence" value="ECO:0007669"/>
    <property type="project" value="Ensembl"/>
</dbReference>
<dbReference type="GO" id="GO:0000184">
    <property type="term" value="P:nuclear-transcribed mRNA catabolic process, nonsense-mediated decay"/>
    <property type="evidence" value="ECO:0007669"/>
    <property type="project" value="UniProtKB-KW"/>
</dbReference>
<dbReference type="GO" id="GO:0045727">
    <property type="term" value="P:positive regulation of translation"/>
    <property type="evidence" value="ECO:0007669"/>
    <property type="project" value="Ensembl"/>
</dbReference>
<dbReference type="GO" id="GO:0000381">
    <property type="term" value="P:regulation of alternative mRNA splicing, via spliceosome"/>
    <property type="evidence" value="ECO:0000250"/>
    <property type="project" value="UniProtKB"/>
</dbReference>
<dbReference type="GO" id="GO:2000622">
    <property type="term" value="P:regulation of nuclear-transcribed mRNA catabolic process, nonsense-mediated decay"/>
    <property type="evidence" value="ECO:0007669"/>
    <property type="project" value="Ensembl"/>
</dbReference>
<dbReference type="CDD" id="cd18045">
    <property type="entry name" value="DEADc_EIF4AIII_DDX48"/>
    <property type="match status" value="1"/>
</dbReference>
<dbReference type="CDD" id="cd18787">
    <property type="entry name" value="SF2_C_DEAD"/>
    <property type="match status" value="1"/>
</dbReference>
<dbReference type="FunFam" id="3.40.50.300:FF:000031">
    <property type="entry name" value="Eukaryotic initiation factor 4A-III"/>
    <property type="match status" value="1"/>
</dbReference>
<dbReference type="FunFam" id="3.40.50.300:FF:000498">
    <property type="entry name" value="Eukaryotic initiation factor 4A-III"/>
    <property type="match status" value="1"/>
</dbReference>
<dbReference type="Gene3D" id="3.40.50.300">
    <property type="entry name" value="P-loop containing nucleotide triphosphate hydrolases"/>
    <property type="match status" value="2"/>
</dbReference>
<dbReference type="InterPro" id="IPR011545">
    <property type="entry name" value="DEAD/DEAH_box_helicase_dom"/>
</dbReference>
<dbReference type="InterPro" id="IPR014001">
    <property type="entry name" value="Helicase_ATP-bd"/>
</dbReference>
<dbReference type="InterPro" id="IPR001650">
    <property type="entry name" value="Helicase_C-like"/>
</dbReference>
<dbReference type="InterPro" id="IPR027417">
    <property type="entry name" value="P-loop_NTPase"/>
</dbReference>
<dbReference type="InterPro" id="IPR000629">
    <property type="entry name" value="RNA-helicase_DEAD-box_CS"/>
</dbReference>
<dbReference type="InterPro" id="IPR014014">
    <property type="entry name" value="RNA_helicase_DEAD_Q_motif"/>
</dbReference>
<dbReference type="PANTHER" id="PTHR47958">
    <property type="entry name" value="ATP-DEPENDENT RNA HELICASE DBP3"/>
    <property type="match status" value="1"/>
</dbReference>
<dbReference type="Pfam" id="PF00270">
    <property type="entry name" value="DEAD"/>
    <property type="match status" value="1"/>
</dbReference>
<dbReference type="Pfam" id="PF00271">
    <property type="entry name" value="Helicase_C"/>
    <property type="match status" value="1"/>
</dbReference>
<dbReference type="SMART" id="SM00487">
    <property type="entry name" value="DEXDc"/>
    <property type="match status" value="1"/>
</dbReference>
<dbReference type="SMART" id="SM00490">
    <property type="entry name" value="HELICc"/>
    <property type="match status" value="1"/>
</dbReference>
<dbReference type="SUPFAM" id="SSF52540">
    <property type="entry name" value="P-loop containing nucleoside triphosphate hydrolases"/>
    <property type="match status" value="1"/>
</dbReference>
<dbReference type="PROSITE" id="PS00039">
    <property type="entry name" value="DEAD_ATP_HELICASE"/>
    <property type="match status" value="1"/>
</dbReference>
<dbReference type="PROSITE" id="PS51192">
    <property type="entry name" value="HELICASE_ATP_BIND_1"/>
    <property type="match status" value="1"/>
</dbReference>
<dbReference type="PROSITE" id="PS51194">
    <property type="entry name" value="HELICASE_CTER"/>
    <property type="match status" value="1"/>
</dbReference>
<dbReference type="PROSITE" id="PS51195">
    <property type="entry name" value="Q_MOTIF"/>
    <property type="match status" value="1"/>
</dbReference>
<comment type="function">
    <text evidence="1 3">ATP-dependent RNA helicase. Involved in pre-mRNA splicing as component of the spliceosome. Core component of the splicing-dependent multiprotein exon junction complex (EJC) deposited at splice junctions on mRNAs. The EJC is a dynamic structure consisting of core proteins and several peripheral nuclear and cytoplasmic associated factors that join the complex only transiently either during EJC assembly or during subsequent mRNA metabolism. The EJC marks the position of the exon-exon junction in the mature mRNA for the gene expression machinery and the core components remain bound to spliced mRNAs throughout all stages of mRNA metabolism thereby influencing downstream processes including nuclear mRNA export, subcellular mRNA localization, translation efficiency and nonsense-mediated mRNA decay (NMD). Binds spliced mRNA in sequence-independent manner, 20-24 nucleotides upstream of mRNA exon-exon junctions (By similarity). Involved in craniofacial development (By similarity).</text>
</comment>
<comment type="catalytic activity">
    <reaction evidence="1">
        <text>ATP + H2O = ADP + phosphate + H(+)</text>
        <dbReference type="Rhea" id="RHEA:13065"/>
        <dbReference type="ChEBI" id="CHEBI:15377"/>
        <dbReference type="ChEBI" id="CHEBI:15378"/>
        <dbReference type="ChEBI" id="CHEBI:30616"/>
        <dbReference type="ChEBI" id="CHEBI:43474"/>
        <dbReference type="ChEBI" id="CHEBI:456216"/>
        <dbReference type="EC" id="3.6.4.13"/>
    </reaction>
</comment>
<comment type="subunit">
    <text evidence="1">Identified in the spliceosome C complex. Part of the mRNA splicing-dependent exon junction complex (EJC) complex; the core complex contains casc3, eif4a3, magoh and rbm8a.</text>
</comment>
<comment type="subcellular location">
    <subcellularLocation>
        <location evidence="2">Nucleus</location>
    </subcellularLocation>
    <subcellularLocation>
        <location evidence="1">Nucleus speckle</location>
    </subcellularLocation>
    <subcellularLocation>
        <location evidence="2">Cytoplasm</location>
    </subcellularLocation>
    <text evidence="2">Nucleocytoplasmic shuttling protein. Travels to the cytoplasm as part of the exon junction complex (EJC) bound to mRNA.</text>
</comment>
<comment type="similarity">
    <text evidence="7">Belongs to the DEAD box helicase family. eIF4A subfamily.</text>
</comment>
<evidence type="ECO:0000250" key="1">
    <source>
        <dbReference type="UniProtKB" id="P38919"/>
    </source>
</evidence>
<evidence type="ECO:0000250" key="2">
    <source>
        <dbReference type="UniProtKB" id="Q3B8Q2"/>
    </source>
</evidence>
<evidence type="ECO:0000250" key="3">
    <source>
        <dbReference type="UniProtKB" id="Q7ZVA6"/>
    </source>
</evidence>
<evidence type="ECO:0000255" key="4">
    <source>
        <dbReference type="PROSITE-ProRule" id="PRU00541"/>
    </source>
</evidence>
<evidence type="ECO:0000255" key="5">
    <source>
        <dbReference type="PROSITE-ProRule" id="PRU00542"/>
    </source>
</evidence>
<evidence type="ECO:0000256" key="6">
    <source>
        <dbReference type="SAM" id="MobiDB-lite"/>
    </source>
</evidence>
<evidence type="ECO:0000305" key="7"/>
<name>IF4A3_TAEGU</name>
<sequence>MAGSAGSAGGSARKRLMKEEDMTKVEFETSEEVDVTPTFDTMGLREDLLRGIYAYGFEKPSAIQQRAIKQIIKGRDVIAQSQSGTGKTATFSISVLQCLDIQVRETQALILAPTRELAVQIQKGLLALGDYMNVQCHACIGGTNVGEDIRKLDYGQHVVAGTPGRVFDMIRRRSLRTRAIKMLVLDEADEMLNKGFKEQIYDVYRYLPPATQVVLISATLPHEILEMTNKFMTDPIRILVKRDELTLEGIKQFFVAVEREEWKFDTLCDLYDTLTITQAVIFCNTKRKVDWLTEKMREANFTVSSMHGDMPQKERESIMKEFRSGASRVLISTDVWARGLDVPQVSLIINYDLPNNRELYIHRIGRSGRYGRKGVAINFVKNDDIRILRDIEQYYSTQIDEMPMNVADLI</sequence>
<proteinExistence type="evidence at transcript level"/>
<feature type="chain" id="PRO_0000379479" description="Eukaryotic initiation factor 4A-III">
    <location>
        <begin position="1"/>
        <end position="410"/>
    </location>
</feature>
<feature type="domain" description="Helicase ATP-binding" evidence="4">
    <location>
        <begin position="68"/>
        <end position="238"/>
    </location>
</feature>
<feature type="domain" description="Helicase C-terminal" evidence="5">
    <location>
        <begin position="249"/>
        <end position="410"/>
    </location>
</feature>
<feature type="region of interest" description="Disordered" evidence="6">
    <location>
        <begin position="1"/>
        <end position="20"/>
    </location>
</feature>
<feature type="short sequence motif" description="Q motif">
    <location>
        <begin position="37"/>
        <end position="65"/>
    </location>
</feature>
<feature type="short sequence motif" description="DEAD box" evidence="7">
    <location>
        <begin position="186"/>
        <end position="189"/>
    </location>
</feature>
<feature type="binding site" evidence="1">
    <location>
        <position position="59"/>
    </location>
    <ligand>
        <name>ATP</name>
        <dbReference type="ChEBI" id="CHEBI:30616"/>
    </ligand>
</feature>
<feature type="binding site" evidence="1">
    <location>
        <position position="64"/>
    </location>
    <ligand>
        <name>ATP</name>
        <dbReference type="ChEBI" id="CHEBI:30616"/>
    </ligand>
</feature>
<feature type="binding site" evidence="4">
    <location>
        <begin position="81"/>
        <end position="88"/>
    </location>
    <ligand>
        <name>ATP</name>
        <dbReference type="ChEBI" id="CHEBI:30616"/>
    </ligand>
</feature>
<feature type="binding site" evidence="1">
    <location>
        <begin position="84"/>
        <end position="89"/>
    </location>
    <ligand>
        <name>ATP</name>
        <dbReference type="ChEBI" id="CHEBI:30616"/>
    </ligand>
</feature>
<feature type="binding site" evidence="1">
    <location>
        <position position="341"/>
    </location>
    <ligand>
        <name>ATP</name>
        <dbReference type="ChEBI" id="CHEBI:30616"/>
    </ligand>
</feature>
<feature type="binding site" evidence="1">
    <location>
        <begin position="366"/>
        <end position="370"/>
    </location>
    <ligand>
        <name>ATP</name>
        <dbReference type="ChEBI" id="CHEBI:30616"/>
    </ligand>
</feature>
<keyword id="KW-0067">ATP-binding</keyword>
<keyword id="KW-0963">Cytoplasm</keyword>
<keyword id="KW-0347">Helicase</keyword>
<keyword id="KW-0378">Hydrolase</keyword>
<keyword id="KW-0507">mRNA processing</keyword>
<keyword id="KW-0508">mRNA splicing</keyword>
<keyword id="KW-0509">mRNA transport</keyword>
<keyword id="KW-0866">Nonsense-mediated mRNA decay</keyword>
<keyword id="KW-0547">Nucleotide-binding</keyword>
<keyword id="KW-0539">Nucleus</keyword>
<keyword id="KW-1185">Reference proteome</keyword>
<keyword id="KW-0694">RNA-binding</keyword>
<keyword id="KW-0747">Spliceosome</keyword>
<keyword id="KW-0810">Translation regulation</keyword>
<keyword id="KW-0813">Transport</keyword>
<organism>
    <name type="scientific">Taeniopygia guttata</name>
    <name type="common">Zebra finch</name>
    <name type="synonym">Poephila guttata</name>
    <dbReference type="NCBI Taxonomy" id="59729"/>
    <lineage>
        <taxon>Eukaryota</taxon>
        <taxon>Metazoa</taxon>
        <taxon>Chordata</taxon>
        <taxon>Craniata</taxon>
        <taxon>Vertebrata</taxon>
        <taxon>Euteleostomi</taxon>
        <taxon>Archelosauria</taxon>
        <taxon>Archosauria</taxon>
        <taxon>Dinosauria</taxon>
        <taxon>Saurischia</taxon>
        <taxon>Theropoda</taxon>
        <taxon>Coelurosauria</taxon>
        <taxon>Aves</taxon>
        <taxon>Neognathae</taxon>
        <taxon>Neoaves</taxon>
        <taxon>Telluraves</taxon>
        <taxon>Australaves</taxon>
        <taxon>Passeriformes</taxon>
        <taxon>Passeroidea</taxon>
        <taxon>Estrildidae</taxon>
        <taxon>Estrildinae</taxon>
        <taxon>Taeniopygia</taxon>
    </lineage>
</organism>
<protein>
    <recommendedName>
        <fullName>Eukaryotic initiation factor 4A-III</fullName>
        <shortName>eIF-4A-III</shortName>
        <shortName>eIF4A-III</shortName>
        <ecNumber evidence="1">3.6.4.13</ecNumber>
    </recommendedName>
    <alternativeName>
        <fullName>ATP-dependent RNA helicase DDX48</fullName>
    </alternativeName>
    <alternativeName>
        <fullName>ATP-dependent RNA helicase eIF4A-3</fullName>
    </alternativeName>
    <alternativeName>
        <fullName>DEAD box protein 48</fullName>
    </alternativeName>
    <alternativeName>
        <fullName>Eukaryotic translation initiation factor 4A isoform 3</fullName>
    </alternativeName>
</protein>
<reference key="1">
    <citation type="journal article" date="2006" name="Proc. Natl. Acad. Sci. U.S.A.">
        <title>A molecular neuroethological approach for identifying and characterizing a cascade of behaviorally regulated genes.</title>
        <authorList>
            <person name="Wada K."/>
            <person name="Howard J.T."/>
            <person name="McConnell P."/>
            <person name="Whitney O."/>
            <person name="Lints T."/>
            <person name="Rivas M.V."/>
            <person name="Horita H."/>
            <person name="Patterson M.A."/>
            <person name="White S.A."/>
            <person name="Scharff C."/>
            <person name="Haesler S."/>
            <person name="Zhao S."/>
            <person name="Sakaguchi H."/>
            <person name="Hagiwara M."/>
            <person name="Shiraki T."/>
            <person name="Hirozane-Kishikawa T."/>
            <person name="Skene P."/>
            <person name="Hayashizaki Y."/>
            <person name="Carninci P."/>
            <person name="Jarvis E.D."/>
        </authorList>
    </citation>
    <scope>NUCLEOTIDE SEQUENCE [MRNA]</scope>
    <source>
        <tissue>Brain</tissue>
    </source>
</reference>
<gene>
    <name type="primary">EIF4A3</name>
    <name type="synonym">DDX48</name>
</gene>
<accession>B5FZY7</accession>